<accession>Q62795</accession>
<sequence>MENRCLPKKVPGFCSFRYGLAILLHFCNIVIMAQRVCLNLTMVAMVNKTEPPHLSNKSVAEMLDNVKNPVHSWSLDIQGLVLSSVFLGMVVIQVPVGYLSGAYPMEKIIGSSLFLSSVLSLLIPPAAQVGAALVIVCRVLQGIAQGAVSTGQHGIWVKWAPPLERGRLTSMTLSGFVMGPFIALLVSGFICDLLGWPMVFYIFGIVGCVLSLFWFILLFDDPNNHPYMSSSEKDYITSSLMQQVHSGRQSLPIKAMLKSLPLWAIILNSFAFIWSNNLLVTYTPTFISTTLHVNVRENGLLSSLPYLLAYICGIVAGQMSDFLLSRKIFSVVAVRKLFTTLGIFCPVIFVVCLLYLSYNFYSTVIFLTLANSTLSFSFCGQLINALDIAPRYYGFLKAVTALIGIFGGLISSTLAGLILNQDPEYAWHKNFFLMAGINVTCLAFYLLFAKGDIQDWAKETKTTRL</sequence>
<evidence type="ECO:0000250" key="1">
    <source>
        <dbReference type="UniProtKB" id="Q14916"/>
    </source>
</evidence>
<evidence type="ECO:0000250" key="2">
    <source>
        <dbReference type="UniProtKB" id="Q61983"/>
    </source>
</evidence>
<evidence type="ECO:0000255" key="3"/>
<evidence type="ECO:0000305" key="4"/>
<protein>
    <recommendedName>
        <fullName>Sodium-dependent phosphate transport protein 1</fullName>
    </recommendedName>
    <alternativeName>
        <fullName>Na(+)/PI cotransporter 1</fullName>
    </alternativeName>
    <alternativeName>
        <fullName>Renal Na(+)-dependent phosphate cotransporter 1</fullName>
    </alternativeName>
    <alternativeName>
        <fullName>Renal sodium-dependent phosphate transport protein 1</fullName>
        <shortName>Renal sodium-phosphate transport protein 1</shortName>
    </alternativeName>
    <alternativeName>
        <fullName>Sodium/phosphate cotransporter 1</fullName>
    </alternativeName>
    <alternativeName>
        <fullName>Solute carrier family 17 member 1</fullName>
    </alternativeName>
</protein>
<gene>
    <name type="primary">Slc17a1</name>
    <name type="synonym">Npt1</name>
</gene>
<keyword id="KW-1003">Cell membrane</keyword>
<keyword id="KW-0325">Glycoprotein</keyword>
<keyword id="KW-0406">Ion transport</keyword>
<keyword id="KW-0472">Membrane</keyword>
<keyword id="KW-1185">Reference proteome</keyword>
<keyword id="KW-0915">Sodium</keyword>
<keyword id="KW-0739">Sodium transport</keyword>
<keyword id="KW-0769">Symport</keyword>
<keyword id="KW-0812">Transmembrane</keyword>
<keyword id="KW-1133">Transmembrane helix</keyword>
<keyword id="KW-0813">Transport</keyword>
<proteinExistence type="evidence at transcript level"/>
<name>NPT1_RAT</name>
<organism>
    <name type="scientific">Rattus norvegicus</name>
    <name type="common">Rat</name>
    <dbReference type="NCBI Taxonomy" id="10116"/>
    <lineage>
        <taxon>Eukaryota</taxon>
        <taxon>Metazoa</taxon>
        <taxon>Chordata</taxon>
        <taxon>Craniata</taxon>
        <taxon>Vertebrata</taxon>
        <taxon>Euteleostomi</taxon>
        <taxon>Mammalia</taxon>
        <taxon>Eutheria</taxon>
        <taxon>Euarchontoglires</taxon>
        <taxon>Glires</taxon>
        <taxon>Rodentia</taxon>
        <taxon>Myomorpha</taxon>
        <taxon>Muroidea</taxon>
        <taxon>Muridae</taxon>
        <taxon>Murinae</taxon>
        <taxon>Rattus</taxon>
    </lineage>
</organism>
<comment type="function">
    <text evidence="1">Important for the resorption of phosphate by the kidney. May be involved in actively transporting phosphate into cells via Na(+) cotransport in the renal brush border membrane. Plays a role in urate transport in the kidney.</text>
</comment>
<comment type="catalytic activity">
    <reaction evidence="1">
        <text>3 Na(+)(out) + phosphate(out) = 3 Na(+)(in) + phosphate(in)</text>
        <dbReference type="Rhea" id="RHEA:71255"/>
        <dbReference type="ChEBI" id="CHEBI:29101"/>
        <dbReference type="ChEBI" id="CHEBI:43474"/>
    </reaction>
</comment>
<comment type="catalytic activity">
    <reaction evidence="1">
        <text>urate(out) = urate(in)</text>
        <dbReference type="Rhea" id="RHEA:60368"/>
        <dbReference type="ChEBI" id="CHEBI:17775"/>
    </reaction>
</comment>
<comment type="subunit">
    <text evidence="2">Interacts with PDZK1.</text>
</comment>
<comment type="subcellular location">
    <subcellularLocation>
        <location evidence="1">Apical cell membrane</location>
        <topology evidence="3">Multi-pass membrane protein</topology>
    </subcellularLocation>
</comment>
<comment type="similarity">
    <text evidence="4">Belongs to the major facilitator superfamily. Sodium/anion cotransporter family.</text>
</comment>
<feature type="chain" id="PRO_0000220939" description="Sodium-dependent phosphate transport protein 1">
    <location>
        <begin position="1"/>
        <end position="465"/>
    </location>
</feature>
<feature type="transmembrane region" description="Helical" evidence="3">
    <location>
        <begin position="79"/>
        <end position="99"/>
    </location>
</feature>
<feature type="transmembrane region" description="Helical" evidence="3">
    <location>
        <begin position="117"/>
        <end position="137"/>
    </location>
</feature>
<feature type="transmembrane region" description="Helical" evidence="3">
    <location>
        <begin position="176"/>
        <end position="196"/>
    </location>
</feature>
<feature type="transmembrane region" description="Helical" evidence="3">
    <location>
        <begin position="199"/>
        <end position="219"/>
    </location>
</feature>
<feature type="transmembrane region" description="Helical" evidence="3">
    <location>
        <begin position="260"/>
        <end position="280"/>
    </location>
</feature>
<feature type="transmembrane region" description="Helical" evidence="3">
    <location>
        <begin position="299"/>
        <end position="319"/>
    </location>
</feature>
<feature type="transmembrane region" description="Helical" evidence="3">
    <location>
        <begin position="337"/>
        <end position="357"/>
    </location>
</feature>
<feature type="transmembrane region" description="Helical" evidence="3">
    <location>
        <begin position="363"/>
        <end position="383"/>
    </location>
</feature>
<feature type="transmembrane region" description="Helical" evidence="3">
    <location>
        <begin position="399"/>
        <end position="419"/>
    </location>
</feature>
<feature type="transmembrane region" description="Helical" evidence="3">
    <location>
        <begin position="431"/>
        <end position="451"/>
    </location>
</feature>
<feature type="glycosylation site" description="N-linked (GlcNAc...) asparagine" evidence="3">
    <location>
        <position position="39"/>
    </location>
</feature>
<feature type="glycosylation site" description="N-linked (GlcNAc...) asparagine" evidence="3">
    <location>
        <position position="47"/>
    </location>
</feature>
<feature type="glycosylation site" description="N-linked (GlcNAc...) asparagine" evidence="3">
    <location>
        <position position="56"/>
    </location>
</feature>
<reference key="1">
    <citation type="journal article" date="1995" name="Cell. Mol. Biol. Res.">
        <title>Molecular cloning of two rat Na+/Pi cotransporters: evidence for differential tissue expression of transcripts.</title>
        <authorList>
            <person name="Li H."/>
            <person name="Xie Z."/>
        </authorList>
    </citation>
    <scope>NUCLEOTIDE SEQUENCE [MRNA]</scope>
    <source>
        <tissue>Liver</tissue>
    </source>
</reference>
<dbReference type="EMBL" id="U28504">
    <property type="protein sequence ID" value="AAC52487.1"/>
    <property type="molecule type" value="mRNA"/>
</dbReference>
<dbReference type="SMR" id="Q62795"/>
<dbReference type="FunCoup" id="Q62795">
    <property type="interactions" value="8"/>
</dbReference>
<dbReference type="STRING" id="10116.ENSRNOP00000073817"/>
<dbReference type="BindingDB" id="Q62795"/>
<dbReference type="ChEMBL" id="CHEMBL3398"/>
<dbReference type="GlyCosmos" id="Q62795">
    <property type="glycosylation" value="3 sites, No reported glycans"/>
</dbReference>
<dbReference type="GlyGen" id="Q62795">
    <property type="glycosylation" value="3 sites"/>
</dbReference>
<dbReference type="PhosphoSitePlus" id="Q62795"/>
<dbReference type="PaxDb" id="10116-ENSRNOP00000061056"/>
<dbReference type="AGR" id="RGD:620099"/>
<dbReference type="RGD" id="620099">
    <property type="gene designation" value="Slc17a1"/>
</dbReference>
<dbReference type="eggNOG" id="KOG2532">
    <property type="taxonomic scope" value="Eukaryota"/>
</dbReference>
<dbReference type="InParanoid" id="Q62795"/>
<dbReference type="PhylomeDB" id="Q62795"/>
<dbReference type="Reactome" id="R-RNO-428643">
    <property type="pathway name" value="Organic anion transporters"/>
</dbReference>
<dbReference type="PRO" id="PR:Q62795"/>
<dbReference type="Proteomes" id="UP000002494">
    <property type="component" value="Unplaced"/>
</dbReference>
<dbReference type="GO" id="GO:0016324">
    <property type="term" value="C:apical plasma membrane"/>
    <property type="evidence" value="ECO:0000250"/>
    <property type="project" value="UniProtKB"/>
</dbReference>
<dbReference type="GO" id="GO:0005436">
    <property type="term" value="F:sodium:phosphate symporter activity"/>
    <property type="evidence" value="ECO:0000304"/>
    <property type="project" value="RGD"/>
</dbReference>
<dbReference type="GO" id="GO:0022857">
    <property type="term" value="F:transmembrane transporter activity"/>
    <property type="evidence" value="ECO:0000318"/>
    <property type="project" value="GO_Central"/>
</dbReference>
<dbReference type="GO" id="GO:0035435">
    <property type="term" value="P:phosphate ion transmembrane transport"/>
    <property type="evidence" value="ECO:0007669"/>
    <property type="project" value="InterPro"/>
</dbReference>
<dbReference type="GO" id="GO:0044341">
    <property type="term" value="P:sodium-dependent phosphate transport"/>
    <property type="evidence" value="ECO:0000250"/>
    <property type="project" value="UniProtKB"/>
</dbReference>
<dbReference type="GO" id="GO:0046415">
    <property type="term" value="P:urate metabolic process"/>
    <property type="evidence" value="ECO:0000266"/>
    <property type="project" value="RGD"/>
</dbReference>
<dbReference type="GO" id="GO:0015747">
    <property type="term" value="P:urate transport"/>
    <property type="evidence" value="ECO:0000250"/>
    <property type="project" value="UniProtKB"/>
</dbReference>
<dbReference type="CDD" id="cd17318">
    <property type="entry name" value="MFS_SLC17"/>
    <property type="match status" value="1"/>
</dbReference>
<dbReference type="FunFam" id="1.20.1250.20:FF:000003">
    <property type="entry name" value="Solute carrier family 17 member 3"/>
    <property type="match status" value="1"/>
</dbReference>
<dbReference type="FunFam" id="1.20.1250.20:FF:000060">
    <property type="entry name" value="Solute carrier family 17 member 3"/>
    <property type="match status" value="1"/>
</dbReference>
<dbReference type="Gene3D" id="1.20.1250.20">
    <property type="entry name" value="MFS general substrate transporter like domains"/>
    <property type="match status" value="2"/>
</dbReference>
<dbReference type="InterPro" id="IPR011701">
    <property type="entry name" value="MFS"/>
</dbReference>
<dbReference type="InterPro" id="IPR020846">
    <property type="entry name" value="MFS_dom"/>
</dbReference>
<dbReference type="InterPro" id="IPR050382">
    <property type="entry name" value="MFS_Na/Anion_cotransporter"/>
</dbReference>
<dbReference type="InterPro" id="IPR036259">
    <property type="entry name" value="MFS_trans_sf"/>
</dbReference>
<dbReference type="InterPro" id="IPR004745">
    <property type="entry name" value="Pi_cotranspt"/>
</dbReference>
<dbReference type="NCBIfam" id="TIGR00894">
    <property type="entry name" value="2A0114euk"/>
    <property type="match status" value="1"/>
</dbReference>
<dbReference type="PANTHER" id="PTHR11662:SF26">
    <property type="entry name" value="SODIUM-DEPENDENT PHOSPHATE TRANSPORT PROTEIN 1"/>
    <property type="match status" value="1"/>
</dbReference>
<dbReference type="PANTHER" id="PTHR11662">
    <property type="entry name" value="SOLUTE CARRIER FAMILY 17"/>
    <property type="match status" value="1"/>
</dbReference>
<dbReference type="Pfam" id="PF07690">
    <property type="entry name" value="MFS_1"/>
    <property type="match status" value="1"/>
</dbReference>
<dbReference type="SUPFAM" id="SSF103473">
    <property type="entry name" value="MFS general substrate transporter"/>
    <property type="match status" value="1"/>
</dbReference>
<dbReference type="PROSITE" id="PS50850">
    <property type="entry name" value="MFS"/>
    <property type="match status" value="1"/>
</dbReference>